<organism>
    <name type="scientific">Bacillus cereus (strain G9842)</name>
    <dbReference type="NCBI Taxonomy" id="405531"/>
    <lineage>
        <taxon>Bacteria</taxon>
        <taxon>Bacillati</taxon>
        <taxon>Bacillota</taxon>
        <taxon>Bacilli</taxon>
        <taxon>Bacillales</taxon>
        <taxon>Bacillaceae</taxon>
        <taxon>Bacillus</taxon>
        <taxon>Bacillus cereus group</taxon>
    </lineage>
</organism>
<evidence type="ECO:0000255" key="1">
    <source>
        <dbReference type="HAMAP-Rule" id="MF_01456"/>
    </source>
</evidence>
<accession>B7IQU6</accession>
<reference key="1">
    <citation type="submission" date="2008-10" db="EMBL/GenBank/DDBJ databases">
        <title>Genome sequence of Bacillus cereus G9842.</title>
        <authorList>
            <person name="Dodson R.J."/>
            <person name="Durkin A.S."/>
            <person name="Rosovitz M.J."/>
            <person name="Rasko D.A."/>
            <person name="Hoffmaster A."/>
            <person name="Ravel J."/>
            <person name="Sutton G."/>
        </authorList>
    </citation>
    <scope>NUCLEOTIDE SEQUENCE [LARGE SCALE GENOMIC DNA]</scope>
    <source>
        <strain>G9842</strain>
    </source>
</reference>
<gene>
    <name evidence="1" type="primary">nuoK</name>
    <name type="ordered locus">BCG9842_B5536</name>
</gene>
<protein>
    <recommendedName>
        <fullName evidence="1">NADH-quinone oxidoreductase subunit K</fullName>
        <ecNumber evidence="1">7.1.1.-</ecNumber>
    </recommendedName>
    <alternativeName>
        <fullName evidence="1">NADH dehydrogenase I subunit K</fullName>
    </alternativeName>
    <alternativeName>
        <fullName evidence="1">NDH-1 subunit K</fullName>
    </alternativeName>
</protein>
<proteinExistence type="inferred from homology"/>
<name>NUOK_BACC2</name>
<dbReference type="EC" id="7.1.1.-" evidence="1"/>
<dbReference type="EMBL" id="CP001186">
    <property type="protein sequence ID" value="ACK97997.1"/>
    <property type="molecule type" value="Genomic_DNA"/>
</dbReference>
<dbReference type="RefSeq" id="WP_000100079.1">
    <property type="nucleotide sequence ID" value="NC_011772.1"/>
</dbReference>
<dbReference type="SMR" id="B7IQU6"/>
<dbReference type="GeneID" id="72451944"/>
<dbReference type="KEGG" id="bcg:BCG9842_B5536"/>
<dbReference type="HOGENOM" id="CLU_144724_0_0_9"/>
<dbReference type="Proteomes" id="UP000006744">
    <property type="component" value="Chromosome"/>
</dbReference>
<dbReference type="GO" id="GO:0030964">
    <property type="term" value="C:NADH dehydrogenase complex"/>
    <property type="evidence" value="ECO:0007669"/>
    <property type="project" value="TreeGrafter"/>
</dbReference>
<dbReference type="GO" id="GO:0005886">
    <property type="term" value="C:plasma membrane"/>
    <property type="evidence" value="ECO:0007669"/>
    <property type="project" value="UniProtKB-SubCell"/>
</dbReference>
<dbReference type="GO" id="GO:0050136">
    <property type="term" value="F:NADH:ubiquinone reductase (non-electrogenic) activity"/>
    <property type="evidence" value="ECO:0007669"/>
    <property type="project" value="UniProtKB-UniRule"/>
</dbReference>
<dbReference type="GO" id="GO:0048038">
    <property type="term" value="F:quinone binding"/>
    <property type="evidence" value="ECO:0007669"/>
    <property type="project" value="UniProtKB-KW"/>
</dbReference>
<dbReference type="GO" id="GO:0042773">
    <property type="term" value="P:ATP synthesis coupled electron transport"/>
    <property type="evidence" value="ECO:0007669"/>
    <property type="project" value="InterPro"/>
</dbReference>
<dbReference type="FunFam" id="1.10.287.3510:FF:000001">
    <property type="entry name" value="NADH-quinone oxidoreductase subunit K"/>
    <property type="match status" value="1"/>
</dbReference>
<dbReference type="Gene3D" id="1.10.287.3510">
    <property type="match status" value="1"/>
</dbReference>
<dbReference type="HAMAP" id="MF_01456">
    <property type="entry name" value="NDH1_NuoK"/>
    <property type="match status" value="1"/>
</dbReference>
<dbReference type="InterPro" id="IPR001133">
    <property type="entry name" value="NADH_UbQ_OxRdtase_chain4L/K"/>
</dbReference>
<dbReference type="InterPro" id="IPR039428">
    <property type="entry name" value="NUOK/Mnh_C1-like"/>
</dbReference>
<dbReference type="NCBIfam" id="NF004320">
    <property type="entry name" value="PRK05715.1-2"/>
    <property type="match status" value="1"/>
</dbReference>
<dbReference type="NCBIfam" id="NF004321">
    <property type="entry name" value="PRK05715.1-3"/>
    <property type="match status" value="1"/>
</dbReference>
<dbReference type="NCBIfam" id="NF004322">
    <property type="entry name" value="PRK05715.1-4"/>
    <property type="match status" value="1"/>
</dbReference>
<dbReference type="NCBIfam" id="NF004323">
    <property type="entry name" value="PRK05715.1-5"/>
    <property type="match status" value="1"/>
</dbReference>
<dbReference type="PANTHER" id="PTHR11434:SF16">
    <property type="entry name" value="NADH-UBIQUINONE OXIDOREDUCTASE CHAIN 4L"/>
    <property type="match status" value="1"/>
</dbReference>
<dbReference type="PANTHER" id="PTHR11434">
    <property type="entry name" value="NADH-UBIQUINONE OXIDOREDUCTASE SUBUNIT ND4L"/>
    <property type="match status" value="1"/>
</dbReference>
<dbReference type="Pfam" id="PF00420">
    <property type="entry name" value="Oxidored_q2"/>
    <property type="match status" value="1"/>
</dbReference>
<comment type="function">
    <text evidence="1">NDH-1 shuttles electrons from NADH, via FMN and iron-sulfur (Fe-S) centers, to quinones in the respiratory chain. The immediate electron acceptor for the enzyme in this species is believed to be a menaquinone. Couples the redox reaction to proton translocation (for every two electrons transferred, four hydrogen ions are translocated across the cytoplasmic membrane), and thus conserves the redox energy in a proton gradient.</text>
</comment>
<comment type="catalytic activity">
    <reaction evidence="1">
        <text>a quinone + NADH + 5 H(+)(in) = a quinol + NAD(+) + 4 H(+)(out)</text>
        <dbReference type="Rhea" id="RHEA:57888"/>
        <dbReference type="ChEBI" id="CHEBI:15378"/>
        <dbReference type="ChEBI" id="CHEBI:24646"/>
        <dbReference type="ChEBI" id="CHEBI:57540"/>
        <dbReference type="ChEBI" id="CHEBI:57945"/>
        <dbReference type="ChEBI" id="CHEBI:132124"/>
    </reaction>
</comment>
<comment type="subunit">
    <text evidence="1">NDH-1 is composed of 14 different subunits. Subunits NuoA, H, J, K, L, M, N constitute the membrane sector of the complex.</text>
</comment>
<comment type="subcellular location">
    <subcellularLocation>
        <location evidence="1">Cell membrane</location>
        <topology evidence="1">Multi-pass membrane protein</topology>
    </subcellularLocation>
</comment>
<comment type="similarity">
    <text evidence="1">Belongs to the complex I subunit 4L family.</text>
</comment>
<sequence length="104" mass="11051">MSSVPASAYLTLAIILFCIGLFGALTKRNTVIVLVCIELMLNAANLNLVAFSKLGLFPNLTGQIFSLFTMAVAAAEAAVGLAILIALYRNRTTVQVDEMDTLKG</sequence>
<feature type="chain" id="PRO_0000389946" description="NADH-quinone oxidoreductase subunit K">
    <location>
        <begin position="1"/>
        <end position="104"/>
    </location>
</feature>
<feature type="transmembrane region" description="Helical" evidence="1">
    <location>
        <begin position="4"/>
        <end position="24"/>
    </location>
</feature>
<feature type="transmembrane region" description="Helical" evidence="1">
    <location>
        <begin position="31"/>
        <end position="51"/>
    </location>
</feature>
<feature type="transmembrane region" description="Helical" evidence="1">
    <location>
        <begin position="67"/>
        <end position="87"/>
    </location>
</feature>
<keyword id="KW-1003">Cell membrane</keyword>
<keyword id="KW-0472">Membrane</keyword>
<keyword id="KW-0520">NAD</keyword>
<keyword id="KW-0874">Quinone</keyword>
<keyword id="KW-1278">Translocase</keyword>
<keyword id="KW-0812">Transmembrane</keyword>
<keyword id="KW-1133">Transmembrane helix</keyword>
<keyword id="KW-0813">Transport</keyword>